<reference key="1">
    <citation type="journal article" date="2003" name="Proc. Natl. Acad. Sci. U.S.A.">
        <title>Complete genome sequence of the marine planctomycete Pirellula sp. strain 1.</title>
        <authorList>
            <person name="Gloeckner F.O."/>
            <person name="Kube M."/>
            <person name="Bauer M."/>
            <person name="Teeling H."/>
            <person name="Lombardot T."/>
            <person name="Ludwig W."/>
            <person name="Gade D."/>
            <person name="Beck A."/>
            <person name="Borzym K."/>
            <person name="Heitmann K."/>
            <person name="Rabus R."/>
            <person name="Schlesner H."/>
            <person name="Amann R."/>
            <person name="Reinhardt R."/>
        </authorList>
    </citation>
    <scope>NUCLEOTIDE SEQUENCE [LARGE SCALE GENOMIC DNA]</scope>
    <source>
        <strain>DSM 10527 / NCIMB 13988 / SH1</strain>
    </source>
</reference>
<evidence type="ECO:0000255" key="1">
    <source>
        <dbReference type="HAMAP-Rule" id="MF_00579"/>
    </source>
</evidence>
<evidence type="ECO:0000305" key="2"/>
<sequence>MADPAATPKSLSIACVSIKDTFAEAFDMKATRLIVTADDRRWCDESARAMCGFGTSVIACGLEIAVEQTLSPEQTPDGRPGVAILAFGMSGKDLEKQIPRRAGQCVLTCPTTALYGGIPGGREVHPKRVPIGKSLRYFGDGNQISKQIQHLDADGRSRPVRYWRIPVMDGEFVCQHDVGRVDAIGGGNFILVGRTMQSVTIASRAAIDAMRELPGIITPFPGGTTRSGSKVGSKYAALFASTNDSFCPTLREVTPSELPSEANAAIEVVIDGLSFDEIAESMRVGITAACEAGASEGLLSVSAGNYGGKLGRHHFKLHELLADASSASDSGAER</sequence>
<proteinExistence type="inferred from homology"/>
<gene>
    <name evidence="1" type="primary">ffsA</name>
    <name type="ordered locus">RB9835</name>
</gene>
<dbReference type="EC" id="2.3.1.101" evidence="1"/>
<dbReference type="EMBL" id="BX294150">
    <property type="protein sequence ID" value="CAD76482.1"/>
    <property type="molecule type" value="Genomic_DNA"/>
</dbReference>
<dbReference type="RefSeq" id="NP_869096.1">
    <property type="nucleotide sequence ID" value="NC_005027.1"/>
</dbReference>
<dbReference type="RefSeq" id="WP_007334456.1">
    <property type="nucleotide sequence ID" value="NC_005027.1"/>
</dbReference>
<dbReference type="SMR" id="Q7UKZ8"/>
<dbReference type="STRING" id="243090.RB9835"/>
<dbReference type="EnsemblBacteria" id="CAD76482">
    <property type="protein sequence ID" value="CAD76482"/>
    <property type="gene ID" value="RB9835"/>
</dbReference>
<dbReference type="KEGG" id="rba:RB9835"/>
<dbReference type="PATRIC" id="fig|243090.15.peg.4732"/>
<dbReference type="eggNOG" id="COG2037">
    <property type="taxonomic scope" value="Bacteria"/>
</dbReference>
<dbReference type="HOGENOM" id="CLU_081314_0_0_0"/>
<dbReference type="InParanoid" id="Q7UKZ8"/>
<dbReference type="OrthoDB" id="8841169at2"/>
<dbReference type="UniPathway" id="UPA00562">
    <property type="reaction ID" value="UER00704"/>
</dbReference>
<dbReference type="Proteomes" id="UP000001025">
    <property type="component" value="Chromosome"/>
</dbReference>
<dbReference type="GO" id="GO:0005737">
    <property type="term" value="C:cytoplasm"/>
    <property type="evidence" value="ECO:0007669"/>
    <property type="project" value="UniProtKB-SubCell"/>
</dbReference>
<dbReference type="GO" id="GO:0030270">
    <property type="term" value="F:formylmethanofuran-tetrahydromethanopterin N-formyltransferase activity"/>
    <property type="evidence" value="ECO:0007669"/>
    <property type="project" value="UniProtKB-UniRule"/>
</dbReference>
<dbReference type="GO" id="GO:0046294">
    <property type="term" value="P:formaldehyde catabolic process"/>
    <property type="evidence" value="ECO:0007669"/>
    <property type="project" value="UniProtKB-UniRule"/>
</dbReference>
<dbReference type="GO" id="GO:0006730">
    <property type="term" value="P:one-carbon metabolic process"/>
    <property type="evidence" value="ECO:0007669"/>
    <property type="project" value="UniProtKB-UniRule"/>
</dbReference>
<dbReference type="Gene3D" id="3.30.70.520">
    <property type="match status" value="2"/>
</dbReference>
<dbReference type="HAMAP" id="MF_00579">
    <property type="entry name" value="FTR"/>
    <property type="match status" value="1"/>
</dbReference>
<dbReference type="InterPro" id="IPR014053">
    <property type="entry name" value="ForMFR_H4MPT_ForTrfase"/>
</dbReference>
<dbReference type="InterPro" id="IPR002770">
    <property type="entry name" value="ForMFR_H4MPT_ForTrfase_C"/>
</dbReference>
<dbReference type="InterPro" id="IPR023447">
    <property type="entry name" value="ForMFR_H4MPT_ForTrfase_fd-like"/>
</dbReference>
<dbReference type="InterPro" id="IPR022667">
    <property type="entry name" value="ForMFR_H4MPT_ForTrfase_N"/>
</dbReference>
<dbReference type="NCBIfam" id="TIGR03119">
    <property type="entry name" value="one_C_fhcD"/>
    <property type="match status" value="1"/>
</dbReference>
<dbReference type="NCBIfam" id="NF002554">
    <property type="entry name" value="PRK02114.1"/>
    <property type="match status" value="1"/>
</dbReference>
<dbReference type="Pfam" id="PF01913">
    <property type="entry name" value="FTR"/>
    <property type="match status" value="1"/>
</dbReference>
<dbReference type="Pfam" id="PF02741">
    <property type="entry name" value="FTR_C"/>
    <property type="match status" value="1"/>
</dbReference>
<dbReference type="PIRSF" id="PIRSF006414">
    <property type="entry name" value="Ftr_formyl_trnsf"/>
    <property type="match status" value="1"/>
</dbReference>
<dbReference type="SUPFAM" id="SSF55112">
    <property type="entry name" value="Formylmethanofuran:tetrahydromethanopterin formyltransferase"/>
    <property type="match status" value="2"/>
</dbReference>
<name>FTR_RHOBA</name>
<organism>
    <name type="scientific">Rhodopirellula baltica (strain DSM 10527 / NCIMB 13988 / SH1)</name>
    <dbReference type="NCBI Taxonomy" id="243090"/>
    <lineage>
        <taxon>Bacteria</taxon>
        <taxon>Pseudomonadati</taxon>
        <taxon>Planctomycetota</taxon>
        <taxon>Planctomycetia</taxon>
        <taxon>Pirellulales</taxon>
        <taxon>Pirellulaceae</taxon>
        <taxon>Rhodopirellula</taxon>
    </lineage>
</organism>
<comment type="function">
    <text evidence="1">Catalyzes the transfer of a formyl group from 5-formyl tetrahydromethanopterin (5-formyl-H(4)MPT) to methanofuran (MFR) to produce formylmethanofuran (formyl-MFR) and tetrahydromethanopterin (H(4)MPT).</text>
</comment>
<comment type="catalytic activity">
    <reaction evidence="1">
        <text>N-formylmethanofuran + 5,6,7,8-tetrahydromethanopterin + H(+) = N(5)-formyl-5,6,7,8-tetrahydromethanopterin + methanofuran</text>
        <dbReference type="Rhea" id="RHEA:18061"/>
        <dbReference type="ChEBI" id="CHEBI:15378"/>
        <dbReference type="ChEBI" id="CHEBI:57727"/>
        <dbReference type="ChEBI" id="CHEBI:58018"/>
        <dbReference type="ChEBI" id="CHEBI:58103"/>
        <dbReference type="ChEBI" id="CHEBI:58151"/>
        <dbReference type="EC" id="2.3.1.101"/>
    </reaction>
</comment>
<comment type="pathway">
    <text evidence="1">One-carbon metabolism; formaldehyde degradation; formate from formaldehyde (H(4)MPT route): step 4/5.</text>
</comment>
<comment type="subunit">
    <text evidence="1">Homotetramer.</text>
</comment>
<comment type="subcellular location">
    <subcellularLocation>
        <location evidence="1">Cytoplasm</location>
    </subcellularLocation>
</comment>
<comment type="similarity">
    <text evidence="1 2">Belongs to the FTR family.</text>
</comment>
<accession>Q7UKZ8</accession>
<feature type="chain" id="PRO_0000138125" description="Formylmethanofuran--tetrahydromethanopterin formyltransferase">
    <location>
        <begin position="1"/>
        <end position="334"/>
    </location>
</feature>
<protein>
    <recommendedName>
        <fullName evidence="1">Formylmethanofuran--tetrahydromethanopterin formyltransferase</fullName>
        <shortName evidence="1">Ftr</shortName>
        <ecNumber evidence="1">2.3.1.101</ecNumber>
    </recommendedName>
    <alternativeName>
        <fullName evidence="1">H4MPT formyltransferase</fullName>
    </alternativeName>
</protein>
<keyword id="KW-0012">Acyltransferase</keyword>
<keyword id="KW-0963">Cytoplasm</keyword>
<keyword id="KW-0554">One-carbon metabolism</keyword>
<keyword id="KW-1185">Reference proteome</keyword>
<keyword id="KW-0808">Transferase</keyword>